<protein>
    <recommendedName>
        <fullName evidence="1">3-octaprenyl-4-hydroxybenzoate carboxy-lyase</fullName>
        <ecNumber evidence="1">4.1.1.98</ecNumber>
    </recommendedName>
    <alternativeName>
        <fullName evidence="1">Polyprenyl p-hydroxybenzoate decarboxylase</fullName>
    </alternativeName>
</protein>
<reference key="1">
    <citation type="journal article" date="2004" name="Nat. Genet.">
        <title>Comparison of genome degradation in Paratyphi A and Typhi, human-restricted serovars of Salmonella enterica that cause typhoid.</title>
        <authorList>
            <person name="McClelland M."/>
            <person name="Sanderson K.E."/>
            <person name="Clifton S.W."/>
            <person name="Latreille P."/>
            <person name="Porwollik S."/>
            <person name="Sabo A."/>
            <person name="Meyer R."/>
            <person name="Bieri T."/>
            <person name="Ozersky P."/>
            <person name="McLellan M."/>
            <person name="Harkins C.R."/>
            <person name="Wang C."/>
            <person name="Nguyen C."/>
            <person name="Berghoff A."/>
            <person name="Elliott G."/>
            <person name="Kohlberg S."/>
            <person name="Strong C."/>
            <person name="Du F."/>
            <person name="Carter J."/>
            <person name="Kremizki C."/>
            <person name="Layman D."/>
            <person name="Leonard S."/>
            <person name="Sun H."/>
            <person name="Fulton L."/>
            <person name="Nash W."/>
            <person name="Miner T."/>
            <person name="Minx P."/>
            <person name="Delehaunty K."/>
            <person name="Fronick C."/>
            <person name="Magrini V."/>
            <person name="Nhan M."/>
            <person name="Warren W."/>
            <person name="Florea L."/>
            <person name="Spieth J."/>
            <person name="Wilson R.K."/>
        </authorList>
    </citation>
    <scope>NUCLEOTIDE SEQUENCE [LARGE SCALE GENOMIC DNA]</scope>
    <source>
        <strain>ATCC 9150 / SARB42</strain>
    </source>
</reference>
<evidence type="ECO:0000255" key="1">
    <source>
        <dbReference type="HAMAP-Rule" id="MF_01636"/>
    </source>
</evidence>
<dbReference type="EC" id="4.1.1.98" evidence="1"/>
<dbReference type="EMBL" id="CP000026">
    <property type="protein sequence ID" value="AAV79595.1"/>
    <property type="molecule type" value="Genomic_DNA"/>
</dbReference>
<dbReference type="RefSeq" id="WP_000339770.1">
    <property type="nucleotide sequence ID" value="NC_006511.1"/>
</dbReference>
<dbReference type="SMR" id="Q5PKQ5"/>
<dbReference type="KEGG" id="spt:SPA3819"/>
<dbReference type="HOGENOM" id="CLU_023348_4_1_6"/>
<dbReference type="UniPathway" id="UPA00232"/>
<dbReference type="Proteomes" id="UP000008185">
    <property type="component" value="Chromosome"/>
</dbReference>
<dbReference type="GO" id="GO:0005829">
    <property type="term" value="C:cytosol"/>
    <property type="evidence" value="ECO:0007669"/>
    <property type="project" value="TreeGrafter"/>
</dbReference>
<dbReference type="GO" id="GO:0005886">
    <property type="term" value="C:plasma membrane"/>
    <property type="evidence" value="ECO:0007669"/>
    <property type="project" value="UniProtKB-SubCell"/>
</dbReference>
<dbReference type="GO" id="GO:0008694">
    <property type="term" value="F:3-octaprenyl-4-hydroxybenzoate carboxy-lyase activity"/>
    <property type="evidence" value="ECO:0007669"/>
    <property type="project" value="UniProtKB-UniRule"/>
</dbReference>
<dbReference type="GO" id="GO:0046872">
    <property type="term" value="F:metal ion binding"/>
    <property type="evidence" value="ECO:0007669"/>
    <property type="project" value="UniProtKB-KW"/>
</dbReference>
<dbReference type="GO" id="GO:0006744">
    <property type="term" value="P:ubiquinone biosynthetic process"/>
    <property type="evidence" value="ECO:0007669"/>
    <property type="project" value="UniProtKB-UniRule"/>
</dbReference>
<dbReference type="FunFam" id="1.20.5.570:FF:000001">
    <property type="entry name" value="3-octaprenyl-4-hydroxybenzoate carboxy-lyase"/>
    <property type="match status" value="1"/>
</dbReference>
<dbReference type="FunFam" id="3.40.1670.10:FF:000001">
    <property type="entry name" value="3-octaprenyl-4-hydroxybenzoate carboxy-lyase"/>
    <property type="match status" value="1"/>
</dbReference>
<dbReference type="Gene3D" id="1.20.5.570">
    <property type="entry name" value="Single helix bin"/>
    <property type="match status" value="1"/>
</dbReference>
<dbReference type="Gene3D" id="3.40.1670.10">
    <property type="entry name" value="UbiD C-terminal domain-like"/>
    <property type="match status" value="1"/>
</dbReference>
<dbReference type="HAMAP" id="MF_01636">
    <property type="entry name" value="UbiD"/>
    <property type="match status" value="1"/>
</dbReference>
<dbReference type="InterPro" id="IPR002830">
    <property type="entry name" value="UbiD"/>
</dbReference>
<dbReference type="InterPro" id="IPR049381">
    <property type="entry name" value="UbiD-like_C"/>
</dbReference>
<dbReference type="InterPro" id="IPR049383">
    <property type="entry name" value="UbiD-like_N"/>
</dbReference>
<dbReference type="InterPro" id="IPR023677">
    <property type="entry name" value="UbiD_bacteria"/>
</dbReference>
<dbReference type="InterPro" id="IPR048304">
    <property type="entry name" value="UbiD_Rift_dom"/>
</dbReference>
<dbReference type="NCBIfam" id="NF008175">
    <property type="entry name" value="PRK10922.1"/>
    <property type="match status" value="1"/>
</dbReference>
<dbReference type="NCBIfam" id="TIGR00148">
    <property type="entry name" value="UbiD family decarboxylase"/>
    <property type="match status" value="1"/>
</dbReference>
<dbReference type="PANTHER" id="PTHR30108">
    <property type="entry name" value="3-OCTAPRENYL-4-HYDROXYBENZOATE CARBOXY-LYASE-RELATED"/>
    <property type="match status" value="1"/>
</dbReference>
<dbReference type="PANTHER" id="PTHR30108:SF17">
    <property type="entry name" value="FERULIC ACID DECARBOXYLASE 1"/>
    <property type="match status" value="1"/>
</dbReference>
<dbReference type="Pfam" id="PF01977">
    <property type="entry name" value="UbiD"/>
    <property type="match status" value="1"/>
</dbReference>
<dbReference type="Pfam" id="PF20696">
    <property type="entry name" value="UbiD_C"/>
    <property type="match status" value="1"/>
</dbReference>
<dbReference type="Pfam" id="PF20695">
    <property type="entry name" value="UbiD_N"/>
    <property type="match status" value="1"/>
</dbReference>
<dbReference type="SUPFAM" id="SSF50475">
    <property type="entry name" value="FMN-binding split barrel"/>
    <property type="match status" value="1"/>
</dbReference>
<dbReference type="SUPFAM" id="SSF143968">
    <property type="entry name" value="UbiD C-terminal domain-like"/>
    <property type="match status" value="1"/>
</dbReference>
<comment type="function">
    <text evidence="1">Catalyzes the decarboxylation of 3-octaprenyl-4-hydroxy benzoate to 2-octaprenylphenol, an intermediate step in ubiquinone biosynthesis.</text>
</comment>
<comment type="catalytic activity">
    <reaction evidence="1">
        <text>a 4-hydroxy-3-(all-trans-polyprenyl)benzoate + H(+) = a 2-(all-trans-polyprenyl)phenol + CO2</text>
        <dbReference type="Rhea" id="RHEA:41680"/>
        <dbReference type="Rhea" id="RHEA-COMP:9514"/>
        <dbReference type="Rhea" id="RHEA-COMP:9516"/>
        <dbReference type="ChEBI" id="CHEBI:1269"/>
        <dbReference type="ChEBI" id="CHEBI:15378"/>
        <dbReference type="ChEBI" id="CHEBI:16526"/>
        <dbReference type="ChEBI" id="CHEBI:78396"/>
        <dbReference type="EC" id="4.1.1.98"/>
    </reaction>
</comment>
<comment type="cofactor">
    <cofactor evidence="1">
        <name>prenylated FMN</name>
        <dbReference type="ChEBI" id="CHEBI:87746"/>
    </cofactor>
    <text evidence="1">Binds 1 prenylated FMN per subunit.</text>
</comment>
<comment type="cofactor">
    <cofactor evidence="1">
        <name>Mn(2+)</name>
        <dbReference type="ChEBI" id="CHEBI:29035"/>
    </cofactor>
</comment>
<comment type="pathway">
    <text evidence="1">Cofactor biosynthesis; ubiquinone biosynthesis.</text>
</comment>
<comment type="subunit">
    <text evidence="1">Homohexamer.</text>
</comment>
<comment type="subcellular location">
    <subcellularLocation>
        <location evidence="1">Cell membrane</location>
        <topology evidence="1">Peripheral membrane protein</topology>
    </subcellularLocation>
</comment>
<comment type="similarity">
    <text evidence="1">Belongs to the UbiD family.</text>
</comment>
<accession>Q5PKQ5</accession>
<proteinExistence type="inferred from homology"/>
<feature type="chain" id="PRO_0000267692" description="3-octaprenyl-4-hydroxybenzoate carboxy-lyase">
    <location>
        <begin position="1"/>
        <end position="492"/>
    </location>
</feature>
<feature type="active site" description="Proton donor" evidence="1">
    <location>
        <position position="290"/>
    </location>
</feature>
<feature type="binding site" evidence="1">
    <location>
        <position position="175"/>
    </location>
    <ligand>
        <name>Mn(2+)</name>
        <dbReference type="ChEBI" id="CHEBI:29035"/>
    </ligand>
</feature>
<feature type="binding site" evidence="1">
    <location>
        <begin position="178"/>
        <end position="180"/>
    </location>
    <ligand>
        <name>prenylated FMN</name>
        <dbReference type="ChEBI" id="CHEBI:87746"/>
    </ligand>
</feature>
<feature type="binding site" evidence="1">
    <location>
        <begin position="192"/>
        <end position="194"/>
    </location>
    <ligand>
        <name>prenylated FMN</name>
        <dbReference type="ChEBI" id="CHEBI:87746"/>
    </ligand>
</feature>
<feature type="binding site" evidence="1">
    <location>
        <begin position="197"/>
        <end position="198"/>
    </location>
    <ligand>
        <name>prenylated FMN</name>
        <dbReference type="ChEBI" id="CHEBI:87746"/>
    </ligand>
</feature>
<feature type="binding site" evidence="1">
    <location>
        <position position="241"/>
    </location>
    <ligand>
        <name>Mn(2+)</name>
        <dbReference type="ChEBI" id="CHEBI:29035"/>
    </ligand>
</feature>
<gene>
    <name evidence="1" type="primary">ubiD</name>
    <name type="ordered locus">SPA3819</name>
</gene>
<keyword id="KW-1003">Cell membrane</keyword>
<keyword id="KW-0210">Decarboxylase</keyword>
<keyword id="KW-0285">Flavoprotein</keyword>
<keyword id="KW-0288">FMN</keyword>
<keyword id="KW-0456">Lyase</keyword>
<keyword id="KW-0464">Manganese</keyword>
<keyword id="KW-0472">Membrane</keyword>
<keyword id="KW-0479">Metal-binding</keyword>
<keyword id="KW-0831">Ubiquinone biosynthesis</keyword>
<name>UBID_SALPA</name>
<organism>
    <name type="scientific">Salmonella paratyphi A (strain ATCC 9150 / SARB42)</name>
    <dbReference type="NCBI Taxonomy" id="295319"/>
    <lineage>
        <taxon>Bacteria</taxon>
        <taxon>Pseudomonadati</taxon>
        <taxon>Pseudomonadota</taxon>
        <taxon>Gammaproteobacteria</taxon>
        <taxon>Enterobacterales</taxon>
        <taxon>Enterobacteriaceae</taxon>
        <taxon>Salmonella</taxon>
    </lineage>
</organism>
<sequence length="492" mass="55134">MDAMKYHDLRDFLTLLEQQGELKRITLPVDPHLEITEIADRTLRAGGPALLFESPKGYAMPVLCNLFGTPKRVAMGMGQDDVSALREVGKLLAFLKEPEPPKGFRDLFDKLPQFKQVLNMPTKRLRGAPCQQKIASGDDVDLTRLPVMTCWPDDAAPLITWGLTVTRGPHKERQNLGIYRQQLIGKNKLIMRWLSHRGGALDFQEWLAARPGERFPVSVALGADPATILGAVTPVPDTLSEYAFAGLLRGTKTEVVKCLSNDLEVPASAEIILEGYIEPGEMAPEGPYGDHTGYYNEVDNFPVFTVTHITQREDAIYHSTYTGRPPDEPAVLGVALNEVFVPILQKQFPEIVDFYLPPEGCSYRLAVVTMKKQYAGHAKRVMMGVWSFLRQFMYTKFVIVCDDDVNARDWNDVIWAITTRMDPARDTVLVENTPIDYLDFASPVSGLGSKMGLDATNKWPGETQREWGRPIVKDPEVTARIDAIWDELAIFK</sequence>